<reference key="1">
    <citation type="journal article" date="2002" name="Chem. Biol.">
        <title>The biosynthetic gene cluster for the antitumor rebeccamycin: characterization and generation of indolocarbazole derivatives.</title>
        <authorList>
            <person name="Sanchez C."/>
            <person name="Butovich I.A."/>
            <person name="Brana A.F."/>
            <person name="Rohr J."/>
            <person name="Mendez C."/>
            <person name="Salas J.A."/>
        </authorList>
    </citation>
    <scope>NUCLEOTIDE SEQUENCE [GENOMIC DNA]</scope>
    <source>
        <strain>ATCC 39243 / DSM 44217 / BCRC 13729 / KCTC 9384</strain>
    </source>
</reference>
<reference key="2">
    <citation type="journal article" date="2002" name="J. Antibiot.">
        <title>Cloning of the staurosporine biosynthetic gene cluster from Streptomyces sp. TP-A0274 and its heterologous expression in Streptomyces lividans.</title>
        <authorList>
            <person name="Onaka H."/>
            <person name="Taniguchi S."/>
            <person name="Igarashi Y."/>
            <person name="Furumai T."/>
        </authorList>
    </citation>
    <scope>NUCLEOTIDE SEQUENCE [GENOMIC DNA]</scope>
</reference>
<reference key="3">
    <citation type="submission" date="2002-08" db="EMBL/GenBank/DDBJ databases">
        <title>The Biosynthesis of Indolocarbazoles in a Heterologous E. coli Host.</title>
        <authorList>
            <person name="Hyun C.-G."/>
            <person name="Bililign T."/>
            <person name="Liao J."/>
            <person name="Thorson J.S."/>
        </authorList>
    </citation>
    <scope>NUCLEOTIDE SEQUENCE [GENOMIC DNA]</scope>
</reference>
<reference key="4">
    <citation type="journal article" date="2003" name="Biosci. Biotechnol. Biochem.">
        <title>Characterization of the biosynthetic gene cluster of rebeccamycin from Lechevalieria aerocolonigenes ATCC 39243.</title>
        <authorList>
            <person name="Onaka H."/>
            <person name="Taniguchi S."/>
            <person name="Igarashi Y."/>
            <person name="Furumai T."/>
        </authorList>
    </citation>
    <scope>NUCLEOTIDE SEQUENCE [GENOMIC DNA]</scope>
    <scope>FUNCTION IN THE REBECCAMYCIN BIOSYNTHESIS</scope>
    <source>
        <strain>ATCC 39243 / DSM 44217 / BCRC 13729 / KCTC 9384</strain>
    </source>
</reference>
<reference key="5">
    <citation type="journal article" date="2003" name="J. Antibiot.">
        <title>pTOYAMAcos, pTYM18, and pTYM19, actinomycete-Escherichia coli integrating vectors for heterologous gene expression.</title>
        <authorList>
            <person name="Onaka H."/>
            <person name="Taniguchi S."/>
            <person name="Ikeda H."/>
            <person name="Igarashi Y."/>
            <person name="Furumai T."/>
        </authorList>
    </citation>
    <scope>NUCLEOTIDE SEQUENCE [GENOMIC DNA]</scope>
</reference>
<reference key="6">
    <citation type="journal article" date="2005" name="J. Bacteriol.">
        <title>Molecular analysis of the rebeccamycin L-amino acid oxidase from Lechevalieria aerocolonigenes ATCC 39243.</title>
        <authorList>
            <person name="Nishizawa T."/>
            <person name="Aldrich C.C."/>
            <person name="Sherman D.H."/>
        </authorList>
    </citation>
    <scope>NUCLEOTIDE SEQUENCE [GENOMIC DNA]</scope>
    <scope>FUNCTION</scope>
    <scope>CATALYTIC ACTIVITY</scope>
    <scope>BIOPHYSICOCHEMICAL PROPERTIES</scope>
    <scope>SUBSTRATE SPECIFICITY</scope>
    <scope>COFACTOR</scope>
    <scope>SUBUNIT</scope>
    <source>
        <strain>ATCC 39243 / DSM 44217 / BCRC 13729 / KCTC 9384</strain>
    </source>
</reference>
<reference key="7">
    <citation type="journal article" date="2006" name="Nihon Hosenkin Gakkaishi">
        <title>Biosynthesis of heterocyclic antibiotics in actinomycetes and an approach to synthesize the natural compounds.</title>
        <authorList>
            <person name="Onaka H."/>
        </authorList>
    </citation>
    <scope>NUCLEOTIDE SEQUENCE [GENOMIC DNA]</scope>
</reference>
<reference key="8">
    <citation type="journal article" date="2006" name="Tetrahedron Lett.">
        <title>Direct formation of chromopyrrolic acid from indole-3-pyruvic acid by StaD, a novel hemoprotein in indolocarbazole biosynthesis.</title>
        <authorList>
            <person name="Asamizu S."/>
            <person name="Kato Y."/>
            <person name="Igarashi Y."/>
            <person name="Furumai T."/>
            <person name="Onaka H."/>
        </authorList>
    </citation>
    <scope>NUCLEOTIDE SEQUENCE [GENOMIC DNA]</scope>
</reference>
<reference key="9">
    <citation type="journal article" date="2005" name="Biochemistry">
        <title>Enzymatic generation of the chromopyrrolic acid scaffold of rebeccamycin by the tandem action of RebO and RebD.</title>
        <authorList>
            <person name="Howard-Jones A.R."/>
            <person name="Walsh C.T."/>
        </authorList>
    </citation>
    <scope>FUNCTION</scope>
    <scope>CATALYTIC ACTIVITY</scope>
    <scope>SUBSTRATE SPECIFICITY</scope>
    <scope>COFACTOR</scope>
    <scope>SUBUNIT</scope>
</reference>
<reference key="10">
    <citation type="journal article" date="2015" name="Arch. Biochem. Biophys.">
        <title>Evidence for catalytic intermediates involved in generating the chromopyrrolic acid scaffold of rebeccamycin by RebO and RebD.</title>
        <authorList>
            <person name="Spolitak T."/>
            <person name="Ballou D.P."/>
        </authorList>
    </citation>
    <scope>FUNCTION</scope>
    <scope>CATALYTIC ACTIVITY</scope>
    <source>
        <strain>ATCC 39243 / DSM 44217 / BCRC 13729 / KCTC 9384</strain>
    </source>
</reference>
<name>REBO_LENAE</name>
<protein>
    <recommendedName>
        <fullName>Flavin-dependent L-tryptophan oxidase RebO</fullName>
        <ecNumber evidence="4 5 6">1.4.3.23</ecNumber>
    </recommendedName>
    <alternativeName>
        <fullName>L-amino acid oxidase protein</fullName>
        <shortName>L-AAO</shortName>
    </alternativeName>
</protein>
<feature type="signal peptide" evidence="2">
    <location>
        <begin position="1"/>
        <end position="21"/>
    </location>
</feature>
<feature type="chain" id="PRO_0000424086" description="Flavin-dependent L-tryptophan oxidase RebO">
    <location>
        <begin position="22"/>
        <end position="473"/>
    </location>
</feature>
<feature type="binding site" evidence="1">
    <location>
        <begin position="15"/>
        <end position="16"/>
    </location>
    <ligand>
        <name>FAD</name>
        <dbReference type="ChEBI" id="CHEBI:57692"/>
    </ligand>
</feature>
<feature type="binding site" evidence="1">
    <location>
        <begin position="35"/>
        <end position="36"/>
    </location>
    <ligand>
        <name>FAD</name>
        <dbReference type="ChEBI" id="CHEBI:57692"/>
    </ligand>
</feature>
<feature type="binding site" evidence="1">
    <location>
        <position position="43"/>
    </location>
    <ligand>
        <name>FAD</name>
        <dbReference type="ChEBI" id="CHEBI:57692"/>
    </ligand>
</feature>
<feature type="binding site" evidence="1">
    <location>
        <begin position="61"/>
        <end position="64"/>
    </location>
    <ligand>
        <name>FAD</name>
        <dbReference type="ChEBI" id="CHEBI:57692"/>
    </ligand>
</feature>
<feature type="binding site" evidence="1">
    <location>
        <position position="444"/>
    </location>
    <ligand>
        <name>FAD</name>
        <dbReference type="ChEBI" id="CHEBI:57692"/>
    </ligand>
</feature>
<feature type="binding site" evidence="1">
    <location>
        <begin position="451"/>
        <end position="456"/>
    </location>
    <ligand>
        <name>FAD</name>
        <dbReference type="ChEBI" id="CHEBI:57692"/>
    </ligand>
</feature>
<keyword id="KW-0274">FAD</keyword>
<keyword id="KW-0285">Flavoprotein</keyword>
<keyword id="KW-0560">Oxidoreductase</keyword>
<keyword id="KW-0732">Signal</keyword>
<comment type="function">
    <text evidence="3 4 5 6">Involved in the biosynthesis of the indolocarbazole antitumor agent rebeccamycin. It generates the imine form of 7-chloroindole 3-pyruvate (7Cl-IPA) from 7-chloro-L-tryptophan (7Cl-Trp), with concomitant two-electron reduction of O(2) to H(2)O(2). The enzyme is also active with L-tryptophan as substrate.</text>
</comment>
<comment type="catalytic activity">
    <reaction evidence="4 5 6">
        <text>7-chloro-L-tryptophan + O2 = 3-(7-chloroindol-3-yl)-2-iminopropanoate + H2O2</text>
        <dbReference type="Rhea" id="RHEA:27302"/>
        <dbReference type="ChEBI" id="CHEBI:15379"/>
        <dbReference type="ChEBI" id="CHEBI:16240"/>
        <dbReference type="ChEBI" id="CHEBI:58713"/>
        <dbReference type="ChEBI" id="CHEBI:59194"/>
        <dbReference type="EC" id="1.4.3.23"/>
    </reaction>
</comment>
<comment type="catalytic activity">
    <reaction evidence="4 5 6">
        <text>L-tryptophan + O2 = 2-iminio-3-(indol-3-yl)propanoate + H2O2</text>
        <dbReference type="Rhea" id="RHEA:49024"/>
        <dbReference type="ChEBI" id="CHEBI:15379"/>
        <dbReference type="ChEBI" id="CHEBI:16240"/>
        <dbReference type="ChEBI" id="CHEBI:57912"/>
        <dbReference type="ChEBI" id="CHEBI:59193"/>
        <dbReference type="EC" id="1.4.3.23"/>
    </reaction>
</comment>
<comment type="cofactor">
    <cofactor evidence="4 5">
        <name>FAD</name>
        <dbReference type="ChEBI" id="CHEBI:57692"/>
    </cofactor>
</comment>
<comment type="biophysicochemical properties">
    <kinetics>
        <KM evidence="4">0.088 mM for 7-chloro-L-tryptophan (at pH 7.8)</KM>
        <KM evidence="4">1.43 mM for 1-methyl-L-tryptophan (at pH 7.8)</KM>
        <KM evidence="4">1.53 mM for L-tryptophan (at pH 7.8)</KM>
        <KM evidence="4">1.84 mM for 5-fluoro-L-tryptophan (at pH 7.8)</KM>
        <text>kcat is 12.12 min(-1), 1.53 min(-1), 14.32 min(-1), and 39.82 min(-1) for L-tryptophan, 1-methyl-L-tryptophan, 5-fluoro-L-tryptophan and 7-chloro-L-tryptophan, respectively (at pH 7.8).</text>
    </kinetics>
</comment>
<comment type="subunit">
    <text evidence="4 5">Homodimer.</text>
</comment>
<comment type="similarity">
    <text evidence="7">Belongs to the flavin monoamine oxidase family. RebO subfamily.</text>
</comment>
<gene>
    <name type="primary">rebO</name>
    <name type="synonym">rbmB</name>
</gene>
<organism>
    <name type="scientific">Lentzea aerocolonigenes</name>
    <name type="common">Lechevalieria aerocolonigenes</name>
    <name type="synonym">Saccharothrix aerocolonigenes</name>
    <dbReference type="NCBI Taxonomy" id="68170"/>
    <lineage>
        <taxon>Bacteria</taxon>
        <taxon>Bacillati</taxon>
        <taxon>Actinomycetota</taxon>
        <taxon>Actinomycetes</taxon>
        <taxon>Pseudonocardiales</taxon>
        <taxon>Pseudonocardiaceae</taxon>
        <taxon>Lentzea</taxon>
    </lineage>
</organism>
<accession>Q8KHS0</accession>
<proteinExistence type="evidence at protein level"/>
<sequence length="473" mass="51897">MSRGHKKITVLGAGVAGLVAAHELEELGHEVEVLEGSDRLGGRVHTHRFGEGGSVPFVELGAMRIPTKHRHTIDYIGKLGLTPKLKEFKTLFSDDGAYHTTSAGFVRVRDAAKVLVDEFRLLMSGRDLREETILFGAWLTAVGDAIAPADFRAALRTDFTADLLEVVDRIDLDPFLVGAARDQFDLHAFFAAHPEVRTSCTGKLNRFVDDILDETSPRLLRLEGGMDQLVDALVERIRGDIRTGHEVSAIDVREDHVAVTVHNGHGVNTLRSDHVLCTIPFSVLRNLRLTGLSTDKLEIIHDVKYWSATKVAFRCREPFWERDGINGGASFGGGRIRQTYYPPVEGDPTRGAVLLASYTMGDDADVLGGMPEAQRHEVVLDEVGRMHPELHEPGMVVEAVSRAWGEDRWSNGAGVTRWGKDVAACEEERDRAARPEGRLYFAGEHCSSTTAWIDGAVESALAAVRAIEAGDGR</sequence>
<evidence type="ECO:0000250" key="1"/>
<evidence type="ECO:0000255" key="2"/>
<evidence type="ECO:0000269" key="3">
    <source>
    </source>
</evidence>
<evidence type="ECO:0000269" key="4">
    <source>
    </source>
</evidence>
<evidence type="ECO:0000269" key="5">
    <source>
    </source>
</evidence>
<evidence type="ECO:0000269" key="6">
    <source>
    </source>
</evidence>
<evidence type="ECO:0000305" key="7"/>
<dbReference type="EC" id="1.4.3.23" evidence="4 5 6"/>
<dbReference type="EMBL" id="AF534707">
    <property type="protein sequence ID" value="AAN01208.1"/>
    <property type="molecule type" value="Genomic_DNA"/>
</dbReference>
<dbReference type="EMBL" id="AB090952">
    <property type="protein sequence ID" value="BAC10674.1"/>
    <property type="molecule type" value="Genomic_DNA"/>
</dbReference>
<dbReference type="EMBL" id="AB071405">
    <property type="protein sequence ID" value="BAC15750.1"/>
    <property type="molecule type" value="Genomic_DNA"/>
</dbReference>
<dbReference type="EMBL" id="AJ414559">
    <property type="protein sequence ID" value="CAC93714.1"/>
    <property type="molecule type" value="Genomic_DNA"/>
</dbReference>
<dbReference type="SMR" id="Q8KHS0"/>
<dbReference type="KEGG" id="ag:BAC10674"/>
<dbReference type="BioCyc" id="MetaCyc:MONOMER-15086"/>
<dbReference type="BRENDA" id="1.4.3.23">
    <property type="organism ID" value="4340"/>
</dbReference>
<dbReference type="GO" id="GO:0071949">
    <property type="term" value="F:FAD binding"/>
    <property type="evidence" value="ECO:0000314"/>
    <property type="project" value="UniProtKB"/>
</dbReference>
<dbReference type="GO" id="GO:0001716">
    <property type="term" value="F:L-amino-acid oxidase activity"/>
    <property type="evidence" value="ECO:0007669"/>
    <property type="project" value="TreeGrafter"/>
</dbReference>
<dbReference type="GO" id="GO:0016641">
    <property type="term" value="F:oxidoreductase activity, acting on the CH-NH2 group of donors, oxygen as acceptor"/>
    <property type="evidence" value="ECO:0000314"/>
    <property type="project" value="UniProtKB"/>
</dbReference>
<dbReference type="GO" id="GO:0009063">
    <property type="term" value="P:amino acid catabolic process"/>
    <property type="evidence" value="ECO:0007669"/>
    <property type="project" value="TreeGrafter"/>
</dbReference>
<dbReference type="Gene3D" id="1.20.1440.240">
    <property type="match status" value="1"/>
</dbReference>
<dbReference type="Gene3D" id="3.90.660.10">
    <property type="match status" value="1"/>
</dbReference>
<dbReference type="Gene3D" id="3.50.50.60">
    <property type="entry name" value="FAD/NAD(P)-binding domain"/>
    <property type="match status" value="1"/>
</dbReference>
<dbReference type="InterPro" id="IPR002937">
    <property type="entry name" value="Amino_oxidase"/>
</dbReference>
<dbReference type="InterPro" id="IPR036188">
    <property type="entry name" value="FAD/NAD-bd_sf"/>
</dbReference>
<dbReference type="InterPro" id="IPR050281">
    <property type="entry name" value="Flavin_monoamine_oxidase"/>
</dbReference>
<dbReference type="PANTHER" id="PTHR10742:SF342">
    <property type="entry name" value="AMINE OXIDASE"/>
    <property type="match status" value="1"/>
</dbReference>
<dbReference type="PANTHER" id="PTHR10742">
    <property type="entry name" value="FLAVIN MONOAMINE OXIDASE"/>
    <property type="match status" value="1"/>
</dbReference>
<dbReference type="Pfam" id="PF01593">
    <property type="entry name" value="Amino_oxidase"/>
    <property type="match status" value="1"/>
</dbReference>
<dbReference type="SUPFAM" id="SSF54373">
    <property type="entry name" value="FAD-linked reductases, C-terminal domain"/>
    <property type="match status" value="1"/>
</dbReference>
<dbReference type="SUPFAM" id="SSF51905">
    <property type="entry name" value="FAD/NAD(P)-binding domain"/>
    <property type="match status" value="1"/>
</dbReference>